<organism>
    <name type="scientific">Mus musculus</name>
    <name type="common">Mouse</name>
    <dbReference type="NCBI Taxonomy" id="10090"/>
    <lineage>
        <taxon>Eukaryota</taxon>
        <taxon>Metazoa</taxon>
        <taxon>Chordata</taxon>
        <taxon>Craniata</taxon>
        <taxon>Vertebrata</taxon>
        <taxon>Euteleostomi</taxon>
        <taxon>Mammalia</taxon>
        <taxon>Eutheria</taxon>
        <taxon>Euarchontoglires</taxon>
        <taxon>Glires</taxon>
        <taxon>Rodentia</taxon>
        <taxon>Myomorpha</taxon>
        <taxon>Muroidea</taxon>
        <taxon>Muridae</taxon>
        <taxon>Murinae</taxon>
        <taxon>Mus</taxon>
        <taxon>Mus</taxon>
    </lineage>
</organism>
<feature type="chain" id="PRO_0000252447" description="SCY1-like protein 2">
    <location>
        <begin position="1"/>
        <end position="930"/>
    </location>
</feature>
<feature type="domain" description="Protein kinase" evidence="2">
    <location>
        <begin position="32"/>
        <end position="327"/>
    </location>
</feature>
<feature type="repeat" description="HEAT">
    <location>
        <begin position="443"/>
        <end position="479"/>
    </location>
</feature>
<feature type="region of interest" description="Disordered" evidence="3">
    <location>
        <begin position="658"/>
        <end position="706"/>
    </location>
</feature>
<feature type="region of interest" description="Disordered" evidence="3">
    <location>
        <begin position="895"/>
        <end position="930"/>
    </location>
</feature>
<feature type="compositionally biased region" description="Basic and acidic residues" evidence="3">
    <location>
        <begin position="680"/>
        <end position="694"/>
    </location>
</feature>
<feature type="compositionally biased region" description="Low complexity" evidence="3">
    <location>
        <begin position="695"/>
        <end position="705"/>
    </location>
</feature>
<feature type="compositionally biased region" description="Low complexity" evidence="3">
    <location>
        <begin position="897"/>
        <end position="922"/>
    </location>
</feature>
<feature type="modified residue" description="Phosphoserine" evidence="10">
    <location>
        <position position="658"/>
    </location>
</feature>
<feature type="modified residue" description="Phosphoserine" evidence="10 11">
    <location>
        <position position="677"/>
    </location>
</feature>
<feature type="modified residue" description="Phosphothreonine" evidence="1">
    <location>
        <position position="708"/>
    </location>
</feature>
<feature type="splice variant" id="VSP_020980" description="In isoform 2." evidence="6">
    <location>
        <begin position="1"/>
        <end position="423"/>
    </location>
</feature>
<feature type="splice variant" id="VSP_020981" description="In isoform 2." evidence="6">
    <original>Q</original>
    <variation>M</variation>
    <location>
        <position position="424"/>
    </location>
</feature>
<feature type="splice variant" id="VSP_020982" description="In isoform 2." evidence="6">
    <location>
        <position position="643"/>
    </location>
</feature>
<name>SCYL2_MOUSE</name>
<accession>Q8CFE4</accession>
<accession>Q3UT57</accession>
<accession>Q3UWU9</accession>
<accession>Q8K0M4</accession>
<gene>
    <name evidence="9" type="primary">Scyl2</name>
    <name evidence="7" type="synonym">Cvak104</name>
    <name type="synonym">D10Ertd802e</name>
</gene>
<comment type="function">
    <text evidence="1 5">Component of the AP2-containing clathrin coat that may regulate clathrin-dependent trafficking at plasma membrane, TGN and endosomal system. A possible serine/threonine-protein kinase toward the beta2-subunit of the plasma membrane adapter complex AP2 and other proteins in presence of poly-L-lysine has not been confirmed (By similarity). By regulating the expression of excitatory receptors at synapses, plays an essential role in neuronal function and signaling and in brain development (PubMed:26203146).</text>
</comment>
<comment type="subunit">
    <text evidence="1">Interacts with clathrin and AP2B1; the interaction mediates the association with the AP-2 complex.</text>
</comment>
<comment type="subcellular location">
    <subcellularLocation>
        <location evidence="1">Cytoplasmic vesicle</location>
        <location evidence="1">Clathrin-coated vesicle</location>
    </subcellularLocation>
    <subcellularLocation>
        <location evidence="1">Golgi apparatus</location>
        <location evidence="1">trans-Golgi network membrane</location>
    </subcellularLocation>
    <subcellularLocation>
        <location evidence="1">Endosome membrane</location>
    </subcellularLocation>
    <text evidence="1">Colocalizes to the trans-Golgi network (TGN) and to endosomal membranes with clathrin, transferrin and plasma membrane adapter AP1 and AP3 complexes.</text>
</comment>
<comment type="alternative products">
    <event type="alternative splicing"/>
    <isoform>
        <id>Q8CFE4-1</id>
        <name>1</name>
        <sequence type="displayed"/>
    </isoform>
    <isoform>
        <id>Q8CFE4-2</id>
        <name>2</name>
        <sequence type="described" ref="VSP_020980 VSP_020981 VSP_020982"/>
    </isoform>
</comment>
<comment type="tissue specificity">
    <text evidence="4">Ubiquitously expressed.</text>
</comment>
<comment type="PTM">
    <text evidence="1">Could autophosphorylate in presence of poly-L-lysine.</text>
</comment>
<comment type="disruption phenotype">
    <text evidence="5">Disruption of the gene results in perinatal lethality due to impaired neuronal functions. Mutant animals that survive to adulthood show growth retardation and severe sensorimotor deficits. The neurologic deficits in these mice is associated with the degeneration of several neuronal populations, most notably CA3 pyramidal neurons of the hippocampus, resulting from excitotoxicity. This is associated with excessive expression and activation of calcium-permeable glutamate receptors at the synapse. A wide variety of clathrin-mediated functions and lysosomal pathways are however preserved in mutant mice.</text>
</comment>
<comment type="similarity">
    <text evidence="8">Belongs to the protein kinase superfamily.</text>
</comment>
<proteinExistence type="evidence at protein level"/>
<sequence length="930" mass="103317">MESMLNKLKSTVTKVTADVTSAVMGNPVTREFDVGRHIASGGNGLAWKIFNGTKKSTKQEVAVFVFDKKLIDKYQKFEKDQIIDSLKRGVQQLTRLRHPRLLTVQHPLEESRDCLAFCTEPVFASLANVLGNWENLPSSISPDIKDYKLYDVETKYGLLQVSEGLSFLHSSVKMVHGNVTPENVILNKSGAWKIMGFDFCVSSSNPSEQEPKFPCKEWDPNLPSLCLPNPEYLAPEYILSVSCETASDMYSLGAVMYAVFNQGRPIFEVNKQDIYKSFSRQLDQLSRLGSSSLTSIPEEVREHVKLLLNVTPTVRPDADQMTKIPFFDDVGAVTLQYFDTLFQRDNLQKSQFFKGLPKVLPKLPKRVIVQRILPCLTSEFVNPDMVPFVLPNVLLIAEECTKEEYIKLILPELGPVFKQQEPIQILLIFLQKMDLLLTKTPPDEIKNSVLPMVYRALEAPSIQIQELCLNIIPTFANLIDYPSMKNALIPRIKNACLQTSSLAVRVNSLVCLGKILEYLDKWFVLDDILPFLQQIPSKEPAVLMGILGIYKCTFTHKKLGITKEQLAGKVLPHLIPLSIENNLNLNQFSSFIAVIKEMLSRLESEHRTKLEQLHVMQEQQRSLDIGNQMSTSEETKVAHSGSQQIDKVFNNIGADLLSGSESENREDGMQGKQKRGSLTLEEKQKLAKEQEQAQKLKSQQPLKPQVHTPIAPIKQTKDLTDTLMENMSSLTSLSVSTPKISASSTFTPVPSTGLGMMFSTPIDNTKRNLTNGLNANMGFQTSGFSMPVNPNQNFFSGTGTAGVTTMSLGAPPTMSNFSPLTIPPASVKQPQQRPTDMSALNNLFGPQKPKVSMNQLSQQKPNQWLNQFAPPQGSPVMGSAAMGTQGNVMGQAAFGMQGNPFFNPQNFAQPPPTTMTSSSSASNDLKDLFG</sequence>
<protein>
    <recommendedName>
        <fullName evidence="8">SCY1-like protein 2</fullName>
    </recommendedName>
    <alternativeName>
        <fullName evidence="7">Coated vesicle-associated kinase of 104 kDa</fullName>
    </alternativeName>
</protein>
<reference key="1">
    <citation type="journal article" date="2005" name="Science">
        <title>The transcriptional landscape of the mammalian genome.</title>
        <authorList>
            <person name="Carninci P."/>
            <person name="Kasukawa T."/>
            <person name="Katayama S."/>
            <person name="Gough J."/>
            <person name="Frith M.C."/>
            <person name="Maeda N."/>
            <person name="Oyama R."/>
            <person name="Ravasi T."/>
            <person name="Lenhard B."/>
            <person name="Wells C."/>
            <person name="Kodzius R."/>
            <person name="Shimokawa K."/>
            <person name="Bajic V.B."/>
            <person name="Brenner S.E."/>
            <person name="Batalov S."/>
            <person name="Forrest A.R."/>
            <person name="Zavolan M."/>
            <person name="Davis M.J."/>
            <person name="Wilming L.G."/>
            <person name="Aidinis V."/>
            <person name="Allen J.E."/>
            <person name="Ambesi-Impiombato A."/>
            <person name="Apweiler R."/>
            <person name="Aturaliya R.N."/>
            <person name="Bailey T.L."/>
            <person name="Bansal M."/>
            <person name="Baxter L."/>
            <person name="Beisel K.W."/>
            <person name="Bersano T."/>
            <person name="Bono H."/>
            <person name="Chalk A.M."/>
            <person name="Chiu K.P."/>
            <person name="Choudhary V."/>
            <person name="Christoffels A."/>
            <person name="Clutterbuck D.R."/>
            <person name="Crowe M.L."/>
            <person name="Dalla E."/>
            <person name="Dalrymple B.P."/>
            <person name="de Bono B."/>
            <person name="Della Gatta G."/>
            <person name="di Bernardo D."/>
            <person name="Down T."/>
            <person name="Engstrom P."/>
            <person name="Fagiolini M."/>
            <person name="Faulkner G."/>
            <person name="Fletcher C.F."/>
            <person name="Fukushima T."/>
            <person name="Furuno M."/>
            <person name="Futaki S."/>
            <person name="Gariboldi M."/>
            <person name="Georgii-Hemming P."/>
            <person name="Gingeras T.R."/>
            <person name="Gojobori T."/>
            <person name="Green R.E."/>
            <person name="Gustincich S."/>
            <person name="Harbers M."/>
            <person name="Hayashi Y."/>
            <person name="Hensch T.K."/>
            <person name="Hirokawa N."/>
            <person name="Hill D."/>
            <person name="Huminiecki L."/>
            <person name="Iacono M."/>
            <person name="Ikeo K."/>
            <person name="Iwama A."/>
            <person name="Ishikawa T."/>
            <person name="Jakt M."/>
            <person name="Kanapin A."/>
            <person name="Katoh M."/>
            <person name="Kawasawa Y."/>
            <person name="Kelso J."/>
            <person name="Kitamura H."/>
            <person name="Kitano H."/>
            <person name="Kollias G."/>
            <person name="Krishnan S.P."/>
            <person name="Kruger A."/>
            <person name="Kummerfeld S.K."/>
            <person name="Kurochkin I.V."/>
            <person name="Lareau L.F."/>
            <person name="Lazarevic D."/>
            <person name="Lipovich L."/>
            <person name="Liu J."/>
            <person name="Liuni S."/>
            <person name="McWilliam S."/>
            <person name="Madan Babu M."/>
            <person name="Madera M."/>
            <person name="Marchionni L."/>
            <person name="Matsuda H."/>
            <person name="Matsuzawa S."/>
            <person name="Miki H."/>
            <person name="Mignone F."/>
            <person name="Miyake S."/>
            <person name="Morris K."/>
            <person name="Mottagui-Tabar S."/>
            <person name="Mulder N."/>
            <person name="Nakano N."/>
            <person name="Nakauchi H."/>
            <person name="Ng P."/>
            <person name="Nilsson R."/>
            <person name="Nishiguchi S."/>
            <person name="Nishikawa S."/>
            <person name="Nori F."/>
            <person name="Ohara O."/>
            <person name="Okazaki Y."/>
            <person name="Orlando V."/>
            <person name="Pang K.C."/>
            <person name="Pavan W.J."/>
            <person name="Pavesi G."/>
            <person name="Pesole G."/>
            <person name="Petrovsky N."/>
            <person name="Piazza S."/>
            <person name="Reed J."/>
            <person name="Reid J.F."/>
            <person name="Ring B.Z."/>
            <person name="Ringwald M."/>
            <person name="Rost B."/>
            <person name="Ruan Y."/>
            <person name="Salzberg S.L."/>
            <person name="Sandelin A."/>
            <person name="Schneider C."/>
            <person name="Schoenbach C."/>
            <person name="Sekiguchi K."/>
            <person name="Semple C.A."/>
            <person name="Seno S."/>
            <person name="Sessa L."/>
            <person name="Sheng Y."/>
            <person name="Shibata Y."/>
            <person name="Shimada H."/>
            <person name="Shimada K."/>
            <person name="Silva D."/>
            <person name="Sinclair B."/>
            <person name="Sperling S."/>
            <person name="Stupka E."/>
            <person name="Sugiura K."/>
            <person name="Sultana R."/>
            <person name="Takenaka Y."/>
            <person name="Taki K."/>
            <person name="Tammoja K."/>
            <person name="Tan S.L."/>
            <person name="Tang S."/>
            <person name="Taylor M.S."/>
            <person name="Tegner J."/>
            <person name="Teichmann S.A."/>
            <person name="Ueda H.R."/>
            <person name="van Nimwegen E."/>
            <person name="Verardo R."/>
            <person name="Wei C.L."/>
            <person name="Yagi K."/>
            <person name="Yamanishi H."/>
            <person name="Zabarovsky E."/>
            <person name="Zhu S."/>
            <person name="Zimmer A."/>
            <person name="Hide W."/>
            <person name="Bult C."/>
            <person name="Grimmond S.M."/>
            <person name="Teasdale R.D."/>
            <person name="Liu E.T."/>
            <person name="Brusic V."/>
            <person name="Quackenbush J."/>
            <person name="Wahlestedt C."/>
            <person name="Mattick J.S."/>
            <person name="Hume D.A."/>
            <person name="Kai C."/>
            <person name="Sasaki D."/>
            <person name="Tomaru Y."/>
            <person name="Fukuda S."/>
            <person name="Kanamori-Katayama M."/>
            <person name="Suzuki M."/>
            <person name="Aoki J."/>
            <person name="Arakawa T."/>
            <person name="Iida J."/>
            <person name="Imamura K."/>
            <person name="Itoh M."/>
            <person name="Kato T."/>
            <person name="Kawaji H."/>
            <person name="Kawagashira N."/>
            <person name="Kawashima T."/>
            <person name="Kojima M."/>
            <person name="Kondo S."/>
            <person name="Konno H."/>
            <person name="Nakano K."/>
            <person name="Ninomiya N."/>
            <person name="Nishio T."/>
            <person name="Okada M."/>
            <person name="Plessy C."/>
            <person name="Shibata K."/>
            <person name="Shiraki T."/>
            <person name="Suzuki S."/>
            <person name="Tagami M."/>
            <person name="Waki K."/>
            <person name="Watahiki A."/>
            <person name="Okamura-Oho Y."/>
            <person name="Suzuki H."/>
            <person name="Kawai J."/>
            <person name="Hayashizaki Y."/>
        </authorList>
    </citation>
    <scope>NUCLEOTIDE SEQUENCE [LARGE SCALE MRNA] (ISOFORM 2)</scope>
    <scope>NUCLEOTIDE SEQUENCE [LARGE SCALE MRNA] OF 664-930 (ISOFORMS 1/2)</scope>
    <source>
        <strain>C57BL/6J</strain>
        <tissue>Egg</tissue>
    </source>
</reference>
<reference key="2">
    <citation type="journal article" date="2004" name="Genome Res.">
        <title>The status, quality, and expansion of the NIH full-length cDNA project: the Mammalian Gene Collection (MGC).</title>
        <authorList>
            <consortium name="The MGC Project Team"/>
        </authorList>
    </citation>
    <scope>NUCLEOTIDE SEQUENCE [LARGE SCALE MRNA] (ISOFORM 1)</scope>
    <scope>NUCLEOTIDE SEQUENCE [LARGE SCALE MRNA] OF 817-930 (ISOFORMS 1/2)</scope>
    <source>
        <strain>C57BL/6J</strain>
        <strain>FVB/N</strain>
        <tissue>Mammary tumor</tissue>
        <tissue>Salivary gland</tissue>
    </source>
</reference>
<reference key="3">
    <citation type="journal article" date="2006" name="Mol. Biol. Cell">
        <title>Clathrin-dependent association of CVAK104 with endosomes and the trans-Golgi network.</title>
        <authorList>
            <person name="Duewel M."/>
            <person name="Ungewickell E.J."/>
        </authorList>
    </citation>
    <scope>TISSUE SPECIFICITY</scope>
</reference>
<reference key="4">
    <citation type="journal article" date="2009" name="Immunity">
        <title>The phagosomal proteome in interferon-gamma-activated macrophages.</title>
        <authorList>
            <person name="Trost M."/>
            <person name="English L."/>
            <person name="Lemieux S."/>
            <person name="Courcelles M."/>
            <person name="Desjardins M."/>
            <person name="Thibault P."/>
        </authorList>
    </citation>
    <scope>PHOSPHORYLATION [LARGE SCALE ANALYSIS] AT SER-658 AND SER-677</scope>
    <scope>IDENTIFICATION BY MASS SPECTROMETRY [LARGE SCALE ANALYSIS]</scope>
</reference>
<reference key="5">
    <citation type="journal article" date="2010" name="Cell">
        <title>A tissue-specific atlas of mouse protein phosphorylation and expression.</title>
        <authorList>
            <person name="Huttlin E.L."/>
            <person name="Jedrychowski M.P."/>
            <person name="Elias J.E."/>
            <person name="Goswami T."/>
            <person name="Rad R."/>
            <person name="Beausoleil S.A."/>
            <person name="Villen J."/>
            <person name="Haas W."/>
            <person name="Sowa M.E."/>
            <person name="Gygi S.P."/>
        </authorList>
    </citation>
    <scope>PHOSPHORYLATION [LARGE SCALE ANALYSIS] AT SER-677</scope>
    <scope>IDENTIFICATION BY MASS SPECTROMETRY [LARGE SCALE ANALYSIS]</scope>
    <source>
        <tissue>Brain</tissue>
        <tissue>Brown adipose tissue</tissue>
        <tissue>Heart</tissue>
        <tissue>Kidney</tissue>
        <tissue>Liver</tissue>
        <tissue>Lung</tissue>
        <tissue>Spleen</tissue>
        <tissue>Testis</tissue>
    </source>
</reference>
<reference key="6">
    <citation type="journal article" date="2015" name="J. Neurosci.">
        <title>SCYL2 Protects CA3 Pyramidal Neurons from Excitotoxicity during Functional Maturation of the Mouse Hippocampus.</title>
        <authorList>
            <person name="Gingras S."/>
            <person name="Earls L.R."/>
            <person name="Howell S."/>
            <person name="Smeyne R.J."/>
            <person name="Zakharenko S.S."/>
            <person name="Pelletier S."/>
        </authorList>
    </citation>
    <scope>DISRUPTION PHENOTYPE</scope>
    <scope>FUNCTION</scope>
</reference>
<evidence type="ECO:0000250" key="1">
    <source>
        <dbReference type="UniProtKB" id="Q6P3W7"/>
    </source>
</evidence>
<evidence type="ECO:0000255" key="2">
    <source>
        <dbReference type="PROSITE-ProRule" id="PRU00159"/>
    </source>
</evidence>
<evidence type="ECO:0000256" key="3">
    <source>
        <dbReference type="SAM" id="MobiDB-lite"/>
    </source>
</evidence>
<evidence type="ECO:0000269" key="4">
    <source>
    </source>
</evidence>
<evidence type="ECO:0000269" key="5">
    <source>
    </source>
</evidence>
<evidence type="ECO:0000303" key="6">
    <source>
    </source>
</evidence>
<evidence type="ECO:0000303" key="7">
    <source>
    </source>
</evidence>
<evidence type="ECO:0000305" key="8"/>
<evidence type="ECO:0000312" key="9">
    <source>
        <dbReference type="MGI" id="MGI:1289172"/>
    </source>
</evidence>
<evidence type="ECO:0007744" key="10">
    <source>
    </source>
</evidence>
<evidence type="ECO:0007744" key="11">
    <source>
    </source>
</evidence>
<keyword id="KW-0025">Alternative splicing</keyword>
<keyword id="KW-0968">Cytoplasmic vesicle</keyword>
<keyword id="KW-0967">Endosome</keyword>
<keyword id="KW-0333">Golgi apparatus</keyword>
<keyword id="KW-0472">Membrane</keyword>
<keyword id="KW-0597">Phosphoprotein</keyword>
<keyword id="KW-1185">Reference proteome</keyword>
<dbReference type="EMBL" id="AK136092">
    <property type="protein sequence ID" value="BAE22815.1"/>
    <property type="molecule type" value="mRNA"/>
</dbReference>
<dbReference type="EMBL" id="AK139747">
    <property type="protein sequence ID" value="BAE24123.1"/>
    <property type="molecule type" value="mRNA"/>
</dbReference>
<dbReference type="EMBL" id="BC030932">
    <property type="protein sequence ID" value="AAH30932.1"/>
    <property type="molecule type" value="mRNA"/>
</dbReference>
<dbReference type="EMBL" id="BC042443">
    <property type="protein sequence ID" value="AAH42443.1"/>
    <property type="molecule type" value="mRNA"/>
</dbReference>
<dbReference type="CCDS" id="CCDS36027.1">
    <molecule id="Q8CFE4-1"/>
</dbReference>
<dbReference type="RefSeq" id="NP_932138.1">
    <molecule id="Q8CFE4-1"/>
    <property type="nucleotide sequence ID" value="NM_198021.3"/>
</dbReference>
<dbReference type="SMR" id="Q8CFE4"/>
<dbReference type="BioGRID" id="229417">
    <property type="interactions" value="16"/>
</dbReference>
<dbReference type="FunCoup" id="Q8CFE4">
    <property type="interactions" value="4154"/>
</dbReference>
<dbReference type="IntAct" id="Q8CFE4">
    <property type="interactions" value="1"/>
</dbReference>
<dbReference type="STRING" id="10090.ENSMUSP00000133992"/>
<dbReference type="GlyGen" id="Q8CFE4">
    <property type="glycosylation" value="4 sites, 1 O-linked glycan (4 sites)"/>
</dbReference>
<dbReference type="iPTMnet" id="Q8CFE4"/>
<dbReference type="PhosphoSitePlus" id="Q8CFE4"/>
<dbReference type="SwissPalm" id="Q8CFE4"/>
<dbReference type="jPOST" id="Q8CFE4"/>
<dbReference type="PaxDb" id="10090-ENSMUSP00000133992"/>
<dbReference type="PeptideAtlas" id="Q8CFE4"/>
<dbReference type="ProteomicsDB" id="253429">
    <molecule id="Q8CFE4-1"/>
</dbReference>
<dbReference type="ProteomicsDB" id="253430">
    <molecule id="Q8CFE4-2"/>
</dbReference>
<dbReference type="Pumba" id="Q8CFE4"/>
<dbReference type="Antibodypedia" id="17837">
    <property type="antibodies" value="176 antibodies from 26 providers"/>
</dbReference>
<dbReference type="DNASU" id="213326"/>
<dbReference type="Ensembl" id="ENSMUST00000174252.8">
    <molecule id="Q8CFE4-1"/>
    <property type="protein sequence ID" value="ENSMUSP00000133992.2"/>
    <property type="gene ID" value="ENSMUSG00000069539.12"/>
</dbReference>
<dbReference type="GeneID" id="213326"/>
<dbReference type="KEGG" id="mmu:213326"/>
<dbReference type="UCSC" id="uc007gsl.1">
    <molecule id="Q8CFE4-2"/>
    <property type="organism name" value="mouse"/>
</dbReference>
<dbReference type="UCSC" id="uc007gsm.1">
    <molecule id="Q8CFE4-1"/>
    <property type="organism name" value="mouse"/>
</dbReference>
<dbReference type="AGR" id="MGI:1289172"/>
<dbReference type="CTD" id="55681"/>
<dbReference type="MGI" id="MGI:1289172">
    <property type="gene designation" value="Scyl2"/>
</dbReference>
<dbReference type="VEuPathDB" id="HostDB:ENSMUSG00000069539"/>
<dbReference type="eggNOG" id="KOG2137">
    <property type="taxonomic scope" value="Eukaryota"/>
</dbReference>
<dbReference type="GeneTree" id="ENSGT00880000138031"/>
<dbReference type="InParanoid" id="Q8CFE4"/>
<dbReference type="OMA" id="MAHKCIP"/>
<dbReference type="OrthoDB" id="79687at2759"/>
<dbReference type="PhylomeDB" id="Q8CFE4"/>
<dbReference type="TreeFam" id="TF314178"/>
<dbReference type="BioGRID-ORCS" id="213326">
    <property type="hits" value="2 hits in 78 CRISPR screens"/>
</dbReference>
<dbReference type="ChiTaRS" id="Scyl2">
    <property type="organism name" value="mouse"/>
</dbReference>
<dbReference type="PRO" id="PR:Q8CFE4"/>
<dbReference type="Proteomes" id="UP000000589">
    <property type="component" value="Chromosome 10"/>
</dbReference>
<dbReference type="RNAct" id="Q8CFE4">
    <property type="molecule type" value="protein"/>
</dbReference>
<dbReference type="Bgee" id="ENSMUSG00000069539">
    <property type="expression patterns" value="Expressed in secondary oocyte and 224 other cell types or tissues"/>
</dbReference>
<dbReference type="ExpressionAtlas" id="Q8CFE4">
    <property type="expression patterns" value="baseline and differential"/>
</dbReference>
<dbReference type="GO" id="GO:0030136">
    <property type="term" value="C:clathrin-coated vesicle"/>
    <property type="evidence" value="ECO:0007669"/>
    <property type="project" value="UniProtKB-SubCell"/>
</dbReference>
<dbReference type="GO" id="GO:0010008">
    <property type="term" value="C:endosome membrane"/>
    <property type="evidence" value="ECO:0007669"/>
    <property type="project" value="UniProtKB-SubCell"/>
</dbReference>
<dbReference type="GO" id="GO:0005794">
    <property type="term" value="C:Golgi apparatus"/>
    <property type="evidence" value="ECO:0007669"/>
    <property type="project" value="UniProtKB-SubCell"/>
</dbReference>
<dbReference type="GO" id="GO:0005524">
    <property type="term" value="F:ATP binding"/>
    <property type="evidence" value="ECO:0007669"/>
    <property type="project" value="InterPro"/>
</dbReference>
<dbReference type="GO" id="GO:0004672">
    <property type="term" value="F:protein kinase activity"/>
    <property type="evidence" value="ECO:0007669"/>
    <property type="project" value="InterPro"/>
</dbReference>
<dbReference type="GO" id="GO:0005102">
    <property type="term" value="F:signaling receptor binding"/>
    <property type="evidence" value="ECO:0007669"/>
    <property type="project" value="Ensembl"/>
</dbReference>
<dbReference type="GO" id="GO:0007420">
    <property type="term" value="P:brain development"/>
    <property type="evidence" value="ECO:0000314"/>
    <property type="project" value="UniProtKB"/>
</dbReference>
<dbReference type="GO" id="GO:0072583">
    <property type="term" value="P:clathrin-dependent endocytosis"/>
    <property type="evidence" value="ECO:0007669"/>
    <property type="project" value="Ensembl"/>
</dbReference>
<dbReference type="GO" id="GO:0008333">
    <property type="term" value="P:endosome to lysosome transport"/>
    <property type="evidence" value="ECO:0007669"/>
    <property type="project" value="Ensembl"/>
</dbReference>
<dbReference type="GO" id="GO:0090090">
    <property type="term" value="P:negative regulation of canonical Wnt signaling pathway"/>
    <property type="evidence" value="ECO:0007669"/>
    <property type="project" value="Ensembl"/>
</dbReference>
<dbReference type="GO" id="GO:0021860">
    <property type="term" value="P:pyramidal neuron development"/>
    <property type="evidence" value="ECO:0000315"/>
    <property type="project" value="UniProtKB"/>
</dbReference>
<dbReference type="GO" id="GO:0031623">
    <property type="term" value="P:receptor internalization"/>
    <property type="evidence" value="ECO:0007669"/>
    <property type="project" value="Ensembl"/>
</dbReference>
<dbReference type="CDD" id="cd14011">
    <property type="entry name" value="PK_SCY1_like"/>
    <property type="match status" value="1"/>
</dbReference>
<dbReference type="FunFam" id="3.30.200.20:FF:000179">
    <property type="entry name" value="SCY1 like pseudokinase 2"/>
    <property type="match status" value="1"/>
</dbReference>
<dbReference type="FunFam" id="1.10.510.10:FF:000352">
    <property type="entry name" value="SCY1-like pseudokinase 2"/>
    <property type="match status" value="1"/>
</dbReference>
<dbReference type="FunFam" id="1.25.10.10:FF:000189">
    <property type="entry name" value="SCY1-like pseudokinase 2"/>
    <property type="match status" value="1"/>
</dbReference>
<dbReference type="Gene3D" id="1.25.10.10">
    <property type="entry name" value="Leucine-rich Repeat Variant"/>
    <property type="match status" value="1"/>
</dbReference>
<dbReference type="Gene3D" id="3.30.200.20">
    <property type="entry name" value="Phosphorylase Kinase, domain 1"/>
    <property type="match status" value="1"/>
</dbReference>
<dbReference type="Gene3D" id="1.10.510.10">
    <property type="entry name" value="Transferase(Phosphotransferase) domain 1"/>
    <property type="match status" value="1"/>
</dbReference>
<dbReference type="InterPro" id="IPR011989">
    <property type="entry name" value="ARM-like"/>
</dbReference>
<dbReference type="InterPro" id="IPR016024">
    <property type="entry name" value="ARM-type_fold"/>
</dbReference>
<dbReference type="InterPro" id="IPR051177">
    <property type="entry name" value="CIK-Related_Protein"/>
</dbReference>
<dbReference type="InterPro" id="IPR011009">
    <property type="entry name" value="Kinase-like_dom_sf"/>
</dbReference>
<dbReference type="InterPro" id="IPR000719">
    <property type="entry name" value="Prot_kinase_dom"/>
</dbReference>
<dbReference type="PANTHER" id="PTHR12984:SF6">
    <property type="entry name" value="SCY1-LIKE PROTEIN 2"/>
    <property type="match status" value="1"/>
</dbReference>
<dbReference type="PANTHER" id="PTHR12984">
    <property type="entry name" value="SCY1-RELATED S/T PROTEIN KINASE-LIKE"/>
    <property type="match status" value="1"/>
</dbReference>
<dbReference type="Pfam" id="PF00069">
    <property type="entry name" value="Pkinase"/>
    <property type="match status" value="1"/>
</dbReference>
<dbReference type="SMART" id="SM00220">
    <property type="entry name" value="S_TKc"/>
    <property type="match status" value="1"/>
</dbReference>
<dbReference type="SUPFAM" id="SSF48371">
    <property type="entry name" value="ARM repeat"/>
    <property type="match status" value="1"/>
</dbReference>
<dbReference type="SUPFAM" id="SSF56112">
    <property type="entry name" value="Protein kinase-like (PK-like)"/>
    <property type="match status" value="1"/>
</dbReference>
<dbReference type="PROSITE" id="PS50011">
    <property type="entry name" value="PROTEIN_KINASE_DOM"/>
    <property type="match status" value="1"/>
</dbReference>